<name>CUTC_YERPN</name>
<sequence length="254" mass="27327">MTKLEVCCYSVDCAQIAEKAGADRVELCCGQSEGGVTPSVGALMQARETVTIPVHPIVRPRGGDFCYSSNDFTIMKNDIARIRDLGFAGVVVGVLDTDGHIDMPRMREIMSVSGSLAVTFHRAFDMCQNPMIALKQLAELNVARILTSGQQQNAELGLALLKDLVAATKDQGPIIMAGAGVRLTNMQKFIDAGIRELHSSAGRTVPSTMRYRKAGVTMCADSDVDEFSHYCVDGEVVEAMKSLLVMGSPLAKHT</sequence>
<protein>
    <recommendedName>
        <fullName evidence="1">PF03932 family protein CutC</fullName>
    </recommendedName>
</protein>
<organism>
    <name type="scientific">Yersinia pestis bv. Antiqua (strain Nepal516)</name>
    <dbReference type="NCBI Taxonomy" id="377628"/>
    <lineage>
        <taxon>Bacteria</taxon>
        <taxon>Pseudomonadati</taxon>
        <taxon>Pseudomonadota</taxon>
        <taxon>Gammaproteobacteria</taxon>
        <taxon>Enterobacterales</taxon>
        <taxon>Yersiniaceae</taxon>
        <taxon>Yersinia</taxon>
    </lineage>
</organism>
<proteinExistence type="inferred from homology"/>
<keyword id="KW-0963">Cytoplasm</keyword>
<accession>Q1CJH5</accession>
<accession>C4GSF1</accession>
<comment type="subcellular location">
    <subcellularLocation>
        <location evidence="1">Cytoplasm</location>
    </subcellularLocation>
</comment>
<comment type="similarity">
    <text evidence="1">Belongs to the CutC family.</text>
</comment>
<comment type="caution">
    <text evidence="1">Once thought to be involved in copper homeostasis, experiments in E.coli have shown this is not the case.</text>
</comment>
<gene>
    <name evidence="1" type="primary">cutC</name>
    <name type="ordered locus">YPN_1525</name>
    <name type="ORF">YP516_1693</name>
</gene>
<dbReference type="EMBL" id="CP000305">
    <property type="protein sequence ID" value="ABG17855.1"/>
    <property type="molecule type" value="Genomic_DNA"/>
</dbReference>
<dbReference type="EMBL" id="ACNQ01000009">
    <property type="protein sequence ID" value="EEO76961.1"/>
    <property type="molecule type" value="Genomic_DNA"/>
</dbReference>
<dbReference type="RefSeq" id="WP_002211209.1">
    <property type="nucleotide sequence ID" value="NZ_ACNQ01000009.1"/>
</dbReference>
<dbReference type="SMR" id="Q1CJH5"/>
<dbReference type="GeneID" id="57976613"/>
<dbReference type="KEGG" id="ypn:YPN_1525"/>
<dbReference type="HOGENOM" id="CLU_050555_3_1_6"/>
<dbReference type="Proteomes" id="UP000008936">
    <property type="component" value="Chromosome"/>
</dbReference>
<dbReference type="GO" id="GO:0005737">
    <property type="term" value="C:cytoplasm"/>
    <property type="evidence" value="ECO:0007669"/>
    <property type="project" value="UniProtKB-SubCell"/>
</dbReference>
<dbReference type="GO" id="GO:0005507">
    <property type="term" value="F:copper ion binding"/>
    <property type="evidence" value="ECO:0007669"/>
    <property type="project" value="TreeGrafter"/>
</dbReference>
<dbReference type="FunFam" id="3.20.20.380:FF:000001">
    <property type="entry name" value="Copper homeostasis protein CutC"/>
    <property type="match status" value="1"/>
</dbReference>
<dbReference type="Gene3D" id="3.20.20.380">
    <property type="entry name" value="Copper homeostasis (CutC) domain"/>
    <property type="match status" value="1"/>
</dbReference>
<dbReference type="HAMAP" id="MF_00795">
    <property type="entry name" value="CutC"/>
    <property type="match status" value="1"/>
</dbReference>
<dbReference type="InterPro" id="IPR005627">
    <property type="entry name" value="CutC-like"/>
</dbReference>
<dbReference type="InterPro" id="IPR036822">
    <property type="entry name" value="CutC-like_dom_sf"/>
</dbReference>
<dbReference type="NCBIfam" id="NF008603">
    <property type="entry name" value="PRK11572.1"/>
    <property type="match status" value="1"/>
</dbReference>
<dbReference type="PANTHER" id="PTHR12598">
    <property type="entry name" value="COPPER HOMEOSTASIS PROTEIN CUTC"/>
    <property type="match status" value="1"/>
</dbReference>
<dbReference type="PANTHER" id="PTHR12598:SF0">
    <property type="entry name" value="COPPER HOMEOSTASIS PROTEIN CUTC HOMOLOG"/>
    <property type="match status" value="1"/>
</dbReference>
<dbReference type="Pfam" id="PF03932">
    <property type="entry name" value="CutC"/>
    <property type="match status" value="1"/>
</dbReference>
<dbReference type="SUPFAM" id="SSF110395">
    <property type="entry name" value="CutC-like"/>
    <property type="match status" value="1"/>
</dbReference>
<feature type="chain" id="PRO_1000046951" description="PF03932 family protein CutC">
    <location>
        <begin position="1"/>
        <end position="254"/>
    </location>
</feature>
<reference key="1">
    <citation type="journal article" date="2006" name="J. Bacteriol.">
        <title>Complete genome sequence of Yersinia pestis strains Antiqua and Nepal516: evidence of gene reduction in an emerging pathogen.</title>
        <authorList>
            <person name="Chain P.S.G."/>
            <person name="Hu P."/>
            <person name="Malfatti S.A."/>
            <person name="Radnedge L."/>
            <person name="Larimer F."/>
            <person name="Vergez L.M."/>
            <person name="Worsham P."/>
            <person name="Chu M.C."/>
            <person name="Andersen G.L."/>
        </authorList>
    </citation>
    <scope>NUCLEOTIDE SEQUENCE [LARGE SCALE GENOMIC DNA]</scope>
    <source>
        <strain>Nepal516</strain>
    </source>
</reference>
<reference key="2">
    <citation type="submission" date="2009-04" db="EMBL/GenBank/DDBJ databases">
        <title>Yersinia pestis Nepal516A whole genome shotgun sequencing project.</title>
        <authorList>
            <person name="Plunkett G. III"/>
            <person name="Anderson B.D."/>
            <person name="Baumler D.J."/>
            <person name="Burland V."/>
            <person name="Cabot E.L."/>
            <person name="Glasner J.D."/>
            <person name="Mau B."/>
            <person name="Neeno-Eckwall E."/>
            <person name="Perna N.T."/>
            <person name="Munk A.C."/>
            <person name="Tapia R."/>
            <person name="Green L.D."/>
            <person name="Rogers Y.C."/>
            <person name="Detter J.C."/>
            <person name="Bruce D.C."/>
            <person name="Brettin T.S."/>
        </authorList>
    </citation>
    <scope>NUCLEOTIDE SEQUENCE [LARGE SCALE GENOMIC DNA]</scope>
    <source>
        <strain>Nepal516</strain>
    </source>
</reference>
<evidence type="ECO:0000255" key="1">
    <source>
        <dbReference type="HAMAP-Rule" id="MF_00795"/>
    </source>
</evidence>